<organism>
    <name type="scientific">Pseudomonas aeruginosa (strain UCBPP-PA14)</name>
    <dbReference type="NCBI Taxonomy" id="208963"/>
    <lineage>
        <taxon>Bacteria</taxon>
        <taxon>Pseudomonadati</taxon>
        <taxon>Pseudomonadota</taxon>
        <taxon>Gammaproteobacteria</taxon>
        <taxon>Pseudomonadales</taxon>
        <taxon>Pseudomonadaceae</taxon>
        <taxon>Pseudomonas</taxon>
    </lineage>
</organism>
<keyword id="KW-1015">Disulfide bond</keyword>
<keyword id="KW-0574">Periplasm</keyword>
<keyword id="KW-0646">Protease inhibitor</keyword>
<keyword id="KW-0722">Serine protease inhibitor</keyword>
<keyword id="KW-0732">Signal</keyword>
<sequence length="156" mass="17311">MKALLIAAGVAALSSTAMAAKLDEKVPYPKADAGFTRQVIHLPKQDTEDAFKVEIIAGKTLEADCNQQRLGGELEEHTLEGWGYSYYRLDKVSGPMSTMMACPGQKKEQRFIPVVGEGFLLRYNSKLPIVVYAPKDVEVRYRIWSASEKVEKAVSE</sequence>
<comment type="function">
    <text evidence="1">General inhibitor of family S1 serine proteases.</text>
</comment>
<comment type="subunit">
    <text evidence="1">Homodimer.</text>
</comment>
<comment type="subcellular location">
    <subcellularLocation>
        <location evidence="1">Periplasm</location>
    </subcellularLocation>
</comment>
<comment type="similarity">
    <text evidence="1">Belongs to the protease inhibitor I11 (ecotin) family.</text>
</comment>
<gene>
    <name evidence="1" type="primary">eco</name>
    <name type="ordered locus">PA14_28450</name>
</gene>
<evidence type="ECO:0000255" key="1">
    <source>
        <dbReference type="HAMAP-Rule" id="MF_00706"/>
    </source>
</evidence>
<proteinExistence type="inferred from homology"/>
<name>ECOT_PSEAB</name>
<reference key="1">
    <citation type="journal article" date="2006" name="Genome Biol.">
        <title>Genomic analysis reveals that Pseudomonas aeruginosa virulence is combinatorial.</title>
        <authorList>
            <person name="Lee D.G."/>
            <person name="Urbach J.M."/>
            <person name="Wu G."/>
            <person name="Liberati N.T."/>
            <person name="Feinbaum R.L."/>
            <person name="Miyata S."/>
            <person name="Diggins L.T."/>
            <person name="He J."/>
            <person name="Saucier M."/>
            <person name="Deziel E."/>
            <person name="Friedman L."/>
            <person name="Li L."/>
            <person name="Grills G."/>
            <person name="Montgomery K."/>
            <person name="Kucherlapati R."/>
            <person name="Rahme L.G."/>
            <person name="Ausubel F.M."/>
        </authorList>
    </citation>
    <scope>NUCLEOTIDE SEQUENCE [LARGE SCALE GENOMIC DNA]</scope>
    <source>
        <strain>UCBPP-PA14</strain>
    </source>
</reference>
<feature type="signal peptide" evidence="1">
    <location>
        <begin position="1"/>
        <end position="19"/>
    </location>
</feature>
<feature type="chain" id="PRO_1000045518" description="Ecotin">
    <location>
        <begin position="20"/>
        <end position="156"/>
    </location>
</feature>
<feature type="site" description="Reactive bond" evidence="1">
    <location>
        <begin position="99"/>
        <end position="100"/>
    </location>
</feature>
<feature type="disulfide bond" evidence="1">
    <location>
        <begin position="65"/>
        <end position="102"/>
    </location>
</feature>
<dbReference type="EMBL" id="CP000438">
    <property type="protein sequence ID" value="ABJ11987.1"/>
    <property type="molecule type" value="Genomic_DNA"/>
</dbReference>
<dbReference type="RefSeq" id="WP_003138832.1">
    <property type="nucleotide sequence ID" value="NZ_CP034244.1"/>
</dbReference>
<dbReference type="SMR" id="Q02NQ8"/>
<dbReference type="MEROPS" id="I11.003"/>
<dbReference type="KEGG" id="pau:PA14_28450"/>
<dbReference type="PseudoCAP" id="PA14_28450"/>
<dbReference type="HOGENOM" id="CLU_111565_0_0_6"/>
<dbReference type="BioCyc" id="PAER208963:G1G74-2376-MONOMER"/>
<dbReference type="Proteomes" id="UP000000653">
    <property type="component" value="Chromosome"/>
</dbReference>
<dbReference type="GO" id="GO:0042597">
    <property type="term" value="C:periplasmic space"/>
    <property type="evidence" value="ECO:0007669"/>
    <property type="project" value="UniProtKB-SubCell"/>
</dbReference>
<dbReference type="GO" id="GO:0004867">
    <property type="term" value="F:serine-type endopeptidase inhibitor activity"/>
    <property type="evidence" value="ECO:0007669"/>
    <property type="project" value="UniProtKB-UniRule"/>
</dbReference>
<dbReference type="CDD" id="cd00242">
    <property type="entry name" value="Ecotin"/>
    <property type="match status" value="1"/>
</dbReference>
<dbReference type="Gene3D" id="2.60.40.550">
    <property type="entry name" value="Ecotin"/>
    <property type="match status" value="1"/>
</dbReference>
<dbReference type="Gene3D" id="4.10.1230.10">
    <property type="entry name" value="Ecotin, trypsin inhibitor"/>
    <property type="match status" value="1"/>
</dbReference>
<dbReference type="HAMAP" id="MF_00706">
    <property type="entry name" value="Ecotin"/>
    <property type="match status" value="1"/>
</dbReference>
<dbReference type="InterPro" id="IPR027438">
    <property type="entry name" value="Ecotin_C"/>
</dbReference>
<dbReference type="InterPro" id="IPR036198">
    <property type="entry name" value="Ecotin_sf"/>
</dbReference>
<dbReference type="InterPro" id="IPR005658">
    <property type="entry name" value="Prot_inh_ecotin"/>
</dbReference>
<dbReference type="InterPro" id="IPR023084">
    <property type="entry name" value="Prot_inh_ecotin_gammaproteobac"/>
</dbReference>
<dbReference type="NCBIfam" id="NF002987">
    <property type="entry name" value="PRK03719.1"/>
    <property type="match status" value="1"/>
</dbReference>
<dbReference type="PANTHER" id="PTHR35890">
    <property type="match status" value="1"/>
</dbReference>
<dbReference type="PANTHER" id="PTHR35890:SF3">
    <property type="entry name" value="ECOTIN"/>
    <property type="match status" value="1"/>
</dbReference>
<dbReference type="Pfam" id="PF03974">
    <property type="entry name" value="Ecotin"/>
    <property type="match status" value="1"/>
</dbReference>
<dbReference type="PIRSF" id="PIRSF006865">
    <property type="entry name" value="Prot_inh_ecotin"/>
    <property type="match status" value="1"/>
</dbReference>
<dbReference type="SUPFAM" id="SSF49772">
    <property type="entry name" value="Ecotin, trypsin inhibitor"/>
    <property type="match status" value="1"/>
</dbReference>
<accession>Q02NQ8</accession>
<protein>
    <recommendedName>
        <fullName evidence="1">Ecotin</fullName>
    </recommendedName>
</protein>